<accession>Q3JPY8</accession>
<proteinExistence type="inferred from homology"/>
<comment type="function">
    <text evidence="1">Catalyzes the interconversion between ADP-D-glycero-beta-D-manno-heptose and ADP-L-glycero-beta-D-manno-heptose via an epimerization at carbon 6 of the heptose.</text>
</comment>
<comment type="catalytic activity">
    <reaction evidence="1">
        <text>ADP-D-glycero-beta-D-manno-heptose = ADP-L-glycero-beta-D-manno-heptose</text>
        <dbReference type="Rhea" id="RHEA:17577"/>
        <dbReference type="ChEBI" id="CHEBI:59967"/>
        <dbReference type="ChEBI" id="CHEBI:61506"/>
        <dbReference type="EC" id="5.1.3.20"/>
    </reaction>
</comment>
<comment type="cofactor">
    <cofactor evidence="1">
        <name>NADP(+)</name>
        <dbReference type="ChEBI" id="CHEBI:58349"/>
    </cofactor>
    <text evidence="1">Binds 1 NADP(+) per subunit.</text>
</comment>
<comment type="pathway">
    <text evidence="1">Nucleotide-sugar biosynthesis; ADP-L-glycero-beta-D-manno-heptose biosynthesis; ADP-L-glycero-beta-D-manno-heptose from D-glycero-beta-D-manno-heptose 7-phosphate: step 4/4.</text>
</comment>
<comment type="subunit">
    <text evidence="1">Homopentamer.</text>
</comment>
<comment type="domain">
    <text evidence="1">Contains a large N-terminal NADP-binding domain, and a smaller C-terminal substrate-binding domain.</text>
</comment>
<comment type="similarity">
    <text evidence="1">Belongs to the NAD(P)-dependent epimerase/dehydratase family. HldD subfamily.</text>
</comment>
<name>HLDD_BURP1</name>
<keyword id="KW-0119">Carbohydrate metabolism</keyword>
<keyword id="KW-0413">Isomerase</keyword>
<keyword id="KW-0521">NADP</keyword>
<dbReference type="EC" id="5.1.3.20" evidence="1"/>
<dbReference type="EMBL" id="CP000124">
    <property type="protein sequence ID" value="ABA51019.1"/>
    <property type="molecule type" value="Genomic_DNA"/>
</dbReference>
<dbReference type="SMR" id="Q3JPY8"/>
<dbReference type="EnsemblBacteria" id="ABA51019">
    <property type="protein sequence ID" value="ABA51019"/>
    <property type="gene ID" value="BURPS1710b_2986"/>
</dbReference>
<dbReference type="KEGG" id="bpm:BURPS1710b_2986"/>
<dbReference type="HOGENOM" id="CLU_007383_1_3_4"/>
<dbReference type="UniPathway" id="UPA00356">
    <property type="reaction ID" value="UER00440"/>
</dbReference>
<dbReference type="Proteomes" id="UP000002700">
    <property type="component" value="Chromosome I"/>
</dbReference>
<dbReference type="GO" id="GO:0008712">
    <property type="term" value="F:ADP-glyceromanno-heptose 6-epimerase activity"/>
    <property type="evidence" value="ECO:0007669"/>
    <property type="project" value="UniProtKB-UniRule"/>
</dbReference>
<dbReference type="GO" id="GO:0050661">
    <property type="term" value="F:NADP binding"/>
    <property type="evidence" value="ECO:0007669"/>
    <property type="project" value="InterPro"/>
</dbReference>
<dbReference type="GO" id="GO:0097171">
    <property type="term" value="P:ADP-L-glycero-beta-D-manno-heptose biosynthetic process"/>
    <property type="evidence" value="ECO:0007669"/>
    <property type="project" value="UniProtKB-UniPathway"/>
</dbReference>
<dbReference type="GO" id="GO:0005975">
    <property type="term" value="P:carbohydrate metabolic process"/>
    <property type="evidence" value="ECO:0007669"/>
    <property type="project" value="UniProtKB-UniRule"/>
</dbReference>
<dbReference type="CDD" id="cd05248">
    <property type="entry name" value="ADP_GME_SDR_e"/>
    <property type="match status" value="1"/>
</dbReference>
<dbReference type="Gene3D" id="3.40.50.720">
    <property type="entry name" value="NAD(P)-binding Rossmann-like Domain"/>
    <property type="match status" value="1"/>
</dbReference>
<dbReference type="Gene3D" id="3.90.25.10">
    <property type="entry name" value="UDP-galactose 4-epimerase, domain 1"/>
    <property type="match status" value="1"/>
</dbReference>
<dbReference type="HAMAP" id="MF_01601">
    <property type="entry name" value="Heptose_epimerase"/>
    <property type="match status" value="1"/>
</dbReference>
<dbReference type="InterPro" id="IPR001509">
    <property type="entry name" value="Epimerase_deHydtase"/>
</dbReference>
<dbReference type="InterPro" id="IPR011912">
    <property type="entry name" value="Heptose_epim"/>
</dbReference>
<dbReference type="InterPro" id="IPR036291">
    <property type="entry name" value="NAD(P)-bd_dom_sf"/>
</dbReference>
<dbReference type="NCBIfam" id="TIGR02197">
    <property type="entry name" value="heptose_epim"/>
    <property type="match status" value="1"/>
</dbReference>
<dbReference type="PANTHER" id="PTHR43103:SF3">
    <property type="entry name" value="ADP-L-GLYCERO-D-MANNO-HEPTOSE-6-EPIMERASE"/>
    <property type="match status" value="1"/>
</dbReference>
<dbReference type="PANTHER" id="PTHR43103">
    <property type="entry name" value="NUCLEOSIDE-DIPHOSPHATE-SUGAR EPIMERASE"/>
    <property type="match status" value="1"/>
</dbReference>
<dbReference type="Pfam" id="PF01370">
    <property type="entry name" value="Epimerase"/>
    <property type="match status" value="1"/>
</dbReference>
<dbReference type="SUPFAM" id="SSF51735">
    <property type="entry name" value="NAD(P)-binding Rossmann-fold domains"/>
    <property type="match status" value="1"/>
</dbReference>
<evidence type="ECO:0000255" key="1">
    <source>
        <dbReference type="HAMAP-Rule" id="MF_01601"/>
    </source>
</evidence>
<gene>
    <name evidence="1" type="primary">hldD</name>
    <name type="ordered locus">BURPS1710b_2986</name>
</gene>
<sequence>MTLIVTGAAGFIGANIVKALNERGETRIIAVDNLTRADKFKNLVDCEIDDYLDKTEFVERFARGDFGKVRAVFHEGACSDTMETDGRYMMDNNFRYSRAVLDACLAQGTQFLYASSAAIYGGSSRFVEAREFEAPLNVYGYSKFLFDQVIRRVMPSAKSQIAGFRYFNVYGPRESHKGRMASVAFHNFNQFRAEGKVKLFGEYNGYGPGEQTRDFVSVEDVAKVNLHFFDHPQKSGIFNLGTGRAQPFNDIATTVVNTLRALEGQPALTLAEQVEQGLVEYVPFPDALRGKYQCFTQADQTKLRAAGYDAPFLTVQEGVDRYVRWLFGQL</sequence>
<feature type="chain" id="PRO_0000255722" description="ADP-L-glycero-D-manno-heptose-6-epimerase">
    <location>
        <begin position="1"/>
        <end position="330"/>
    </location>
</feature>
<feature type="active site" description="Proton acceptor" evidence="1">
    <location>
        <position position="139"/>
    </location>
</feature>
<feature type="active site" description="Proton acceptor" evidence="1">
    <location>
        <position position="177"/>
    </location>
</feature>
<feature type="binding site" evidence="1">
    <location>
        <begin position="11"/>
        <end position="12"/>
    </location>
    <ligand>
        <name>NADP(+)</name>
        <dbReference type="ChEBI" id="CHEBI:58349"/>
    </ligand>
</feature>
<feature type="binding site" evidence="1">
    <location>
        <begin position="32"/>
        <end position="33"/>
    </location>
    <ligand>
        <name>NADP(+)</name>
        <dbReference type="ChEBI" id="CHEBI:58349"/>
    </ligand>
</feature>
<feature type="binding site" evidence="1">
    <location>
        <position position="39"/>
    </location>
    <ligand>
        <name>NADP(+)</name>
        <dbReference type="ChEBI" id="CHEBI:58349"/>
    </ligand>
</feature>
<feature type="binding site" evidence="1">
    <location>
        <position position="54"/>
    </location>
    <ligand>
        <name>NADP(+)</name>
        <dbReference type="ChEBI" id="CHEBI:58349"/>
    </ligand>
</feature>
<feature type="binding site" evidence="1">
    <location>
        <begin position="75"/>
        <end position="79"/>
    </location>
    <ligand>
        <name>NADP(+)</name>
        <dbReference type="ChEBI" id="CHEBI:58349"/>
    </ligand>
</feature>
<feature type="binding site" evidence="1">
    <location>
        <position position="92"/>
    </location>
    <ligand>
        <name>NADP(+)</name>
        <dbReference type="ChEBI" id="CHEBI:58349"/>
    </ligand>
</feature>
<feature type="binding site" evidence="1">
    <location>
        <position position="143"/>
    </location>
    <ligand>
        <name>NADP(+)</name>
        <dbReference type="ChEBI" id="CHEBI:58349"/>
    </ligand>
</feature>
<feature type="binding site" evidence="1">
    <location>
        <position position="168"/>
    </location>
    <ligand>
        <name>substrate</name>
    </ligand>
</feature>
<feature type="binding site" evidence="1">
    <location>
        <position position="169"/>
    </location>
    <ligand>
        <name>NADP(+)</name>
        <dbReference type="ChEBI" id="CHEBI:58349"/>
    </ligand>
</feature>
<feature type="binding site" evidence="1">
    <location>
        <position position="177"/>
    </location>
    <ligand>
        <name>NADP(+)</name>
        <dbReference type="ChEBI" id="CHEBI:58349"/>
    </ligand>
</feature>
<feature type="binding site" evidence="1">
    <location>
        <position position="179"/>
    </location>
    <ligand>
        <name>substrate</name>
    </ligand>
</feature>
<feature type="binding site" evidence="1">
    <location>
        <position position="186"/>
    </location>
    <ligand>
        <name>substrate</name>
    </ligand>
</feature>
<feature type="binding site" evidence="1">
    <location>
        <begin position="200"/>
        <end position="203"/>
    </location>
    <ligand>
        <name>substrate</name>
    </ligand>
</feature>
<feature type="binding site" evidence="1">
    <location>
        <position position="213"/>
    </location>
    <ligand>
        <name>substrate</name>
    </ligand>
</feature>
<feature type="binding site" evidence="1">
    <location>
        <position position="292"/>
    </location>
    <ligand>
        <name>substrate</name>
    </ligand>
</feature>
<protein>
    <recommendedName>
        <fullName evidence="1">ADP-L-glycero-D-manno-heptose-6-epimerase</fullName>
        <ecNumber evidence="1">5.1.3.20</ecNumber>
    </recommendedName>
    <alternativeName>
        <fullName evidence="1">ADP-L-glycero-beta-D-manno-heptose-6-epimerase</fullName>
        <shortName evidence="1">ADP-glyceromanno-heptose 6-epimerase</shortName>
        <shortName evidence="1">ADP-hep 6-epimerase</shortName>
        <shortName evidence="1">AGME</shortName>
    </alternativeName>
</protein>
<organism>
    <name type="scientific">Burkholderia pseudomallei (strain 1710b)</name>
    <dbReference type="NCBI Taxonomy" id="320372"/>
    <lineage>
        <taxon>Bacteria</taxon>
        <taxon>Pseudomonadati</taxon>
        <taxon>Pseudomonadota</taxon>
        <taxon>Betaproteobacteria</taxon>
        <taxon>Burkholderiales</taxon>
        <taxon>Burkholderiaceae</taxon>
        <taxon>Burkholderia</taxon>
        <taxon>pseudomallei group</taxon>
    </lineage>
</organism>
<reference key="1">
    <citation type="journal article" date="2010" name="Genome Biol. Evol.">
        <title>Continuing evolution of Burkholderia mallei through genome reduction and large-scale rearrangements.</title>
        <authorList>
            <person name="Losada L."/>
            <person name="Ronning C.M."/>
            <person name="DeShazer D."/>
            <person name="Woods D."/>
            <person name="Fedorova N."/>
            <person name="Kim H.S."/>
            <person name="Shabalina S.A."/>
            <person name="Pearson T.R."/>
            <person name="Brinkac L."/>
            <person name="Tan P."/>
            <person name="Nandi T."/>
            <person name="Crabtree J."/>
            <person name="Badger J."/>
            <person name="Beckstrom-Sternberg S."/>
            <person name="Saqib M."/>
            <person name="Schutzer S.E."/>
            <person name="Keim P."/>
            <person name="Nierman W.C."/>
        </authorList>
    </citation>
    <scope>NUCLEOTIDE SEQUENCE [LARGE SCALE GENOMIC DNA]</scope>
    <source>
        <strain>1710b</strain>
    </source>
</reference>